<sequence>MAAEEHALTSTEYIKHHLTNLTYGKMPDGTWKLAENAKEAQEMGFSAIHLDSMGWSIGLGIIFCLVFWCAAKAAKADVPSKFQSAIEMIIEFVDSSVRDTFHGKSRLIAPLALTIFVWIFLMNLMDLIPVDWVPMLAQIVGAHVFGMDPHHVYFKIVPSTDPNITLGMSLSVFVLILFYSIREKGIGGFVGELALNPFNPSNPVAKALLIPVNLILELVTFLARPISLALRLFGNMYAGELIFILIALLPFWIQWALSVPWAIFHILVITLQAFIFMMLTIVYLSMASEKH</sequence>
<reference key="1">
    <citation type="journal article" date="2004" name="Nucleic Acids Res.">
        <title>Unique features revealed by the genome sequence of Acinetobacter sp. ADP1, a versatile and naturally transformation competent bacterium.</title>
        <authorList>
            <person name="Barbe V."/>
            <person name="Vallenet D."/>
            <person name="Fonknechten N."/>
            <person name="Kreimeyer A."/>
            <person name="Oztas S."/>
            <person name="Labarre L."/>
            <person name="Cruveiller S."/>
            <person name="Robert C."/>
            <person name="Duprat S."/>
            <person name="Wincker P."/>
            <person name="Ornston L.N."/>
            <person name="Weissenbach J."/>
            <person name="Marliere P."/>
            <person name="Cohen G.N."/>
            <person name="Medigue C."/>
        </authorList>
    </citation>
    <scope>NUCLEOTIDE SEQUENCE [LARGE SCALE GENOMIC DNA]</scope>
    <source>
        <strain>ATCC 33305 / BD413 / ADP1</strain>
    </source>
</reference>
<protein>
    <recommendedName>
        <fullName evidence="1">ATP synthase subunit a</fullName>
    </recommendedName>
    <alternativeName>
        <fullName evidence="1">ATP synthase F0 sector subunit a</fullName>
    </alternativeName>
    <alternativeName>
        <fullName evidence="1">F-ATPase subunit 6</fullName>
    </alternativeName>
</protein>
<proteinExistence type="inferred from homology"/>
<keyword id="KW-0066">ATP synthesis</keyword>
<keyword id="KW-0997">Cell inner membrane</keyword>
<keyword id="KW-1003">Cell membrane</keyword>
<keyword id="KW-0138">CF(0)</keyword>
<keyword id="KW-0375">Hydrogen ion transport</keyword>
<keyword id="KW-0406">Ion transport</keyword>
<keyword id="KW-0472">Membrane</keyword>
<keyword id="KW-0812">Transmembrane</keyword>
<keyword id="KW-1133">Transmembrane helix</keyword>
<keyword id="KW-0813">Transport</keyword>
<name>ATP6_ACIAD</name>
<dbReference type="EMBL" id="CR543861">
    <property type="protein sequence ID" value="CAG67151.1"/>
    <property type="molecule type" value="Genomic_DNA"/>
</dbReference>
<dbReference type="RefSeq" id="WP_004930554.1">
    <property type="nucleotide sequence ID" value="NC_005966.1"/>
</dbReference>
<dbReference type="SMR" id="Q6FFK6"/>
<dbReference type="STRING" id="202950.GCA_001485005_01911"/>
<dbReference type="GeneID" id="45232696"/>
<dbReference type="KEGG" id="aci:ACIAD0180"/>
<dbReference type="eggNOG" id="COG0356">
    <property type="taxonomic scope" value="Bacteria"/>
</dbReference>
<dbReference type="HOGENOM" id="CLU_041018_1_0_6"/>
<dbReference type="OrthoDB" id="9789241at2"/>
<dbReference type="BioCyc" id="ASP62977:ACIAD_RS00835-MONOMER"/>
<dbReference type="Proteomes" id="UP000000430">
    <property type="component" value="Chromosome"/>
</dbReference>
<dbReference type="GO" id="GO:0005886">
    <property type="term" value="C:plasma membrane"/>
    <property type="evidence" value="ECO:0007669"/>
    <property type="project" value="UniProtKB-SubCell"/>
</dbReference>
<dbReference type="GO" id="GO:0045259">
    <property type="term" value="C:proton-transporting ATP synthase complex"/>
    <property type="evidence" value="ECO:0007669"/>
    <property type="project" value="UniProtKB-KW"/>
</dbReference>
<dbReference type="GO" id="GO:0046933">
    <property type="term" value="F:proton-transporting ATP synthase activity, rotational mechanism"/>
    <property type="evidence" value="ECO:0007669"/>
    <property type="project" value="UniProtKB-UniRule"/>
</dbReference>
<dbReference type="GO" id="GO:0042777">
    <property type="term" value="P:proton motive force-driven plasma membrane ATP synthesis"/>
    <property type="evidence" value="ECO:0007669"/>
    <property type="project" value="TreeGrafter"/>
</dbReference>
<dbReference type="CDD" id="cd00310">
    <property type="entry name" value="ATP-synt_Fo_a_6"/>
    <property type="match status" value="1"/>
</dbReference>
<dbReference type="FunFam" id="1.20.120.220:FF:000002">
    <property type="entry name" value="ATP synthase subunit a"/>
    <property type="match status" value="1"/>
</dbReference>
<dbReference type="Gene3D" id="1.20.120.220">
    <property type="entry name" value="ATP synthase, F0 complex, subunit A"/>
    <property type="match status" value="1"/>
</dbReference>
<dbReference type="HAMAP" id="MF_01393">
    <property type="entry name" value="ATP_synth_a_bact"/>
    <property type="match status" value="1"/>
</dbReference>
<dbReference type="InterPro" id="IPR045082">
    <property type="entry name" value="ATP_syn_F0_a_bact/chloroplast"/>
</dbReference>
<dbReference type="InterPro" id="IPR000568">
    <property type="entry name" value="ATP_synth_F0_asu"/>
</dbReference>
<dbReference type="InterPro" id="IPR023011">
    <property type="entry name" value="ATP_synth_F0_asu_AS"/>
</dbReference>
<dbReference type="InterPro" id="IPR035908">
    <property type="entry name" value="F0_ATP_A_sf"/>
</dbReference>
<dbReference type="NCBIfam" id="TIGR01131">
    <property type="entry name" value="ATP_synt_6_or_A"/>
    <property type="match status" value="1"/>
</dbReference>
<dbReference type="NCBIfam" id="NF004477">
    <property type="entry name" value="PRK05815.1-1"/>
    <property type="match status" value="1"/>
</dbReference>
<dbReference type="PANTHER" id="PTHR42823">
    <property type="entry name" value="ATP SYNTHASE SUBUNIT A, CHLOROPLASTIC"/>
    <property type="match status" value="1"/>
</dbReference>
<dbReference type="PANTHER" id="PTHR42823:SF3">
    <property type="entry name" value="ATP SYNTHASE SUBUNIT A, CHLOROPLASTIC"/>
    <property type="match status" value="1"/>
</dbReference>
<dbReference type="Pfam" id="PF00119">
    <property type="entry name" value="ATP-synt_A"/>
    <property type="match status" value="1"/>
</dbReference>
<dbReference type="SUPFAM" id="SSF81336">
    <property type="entry name" value="F1F0 ATP synthase subunit A"/>
    <property type="match status" value="1"/>
</dbReference>
<dbReference type="PROSITE" id="PS00449">
    <property type="entry name" value="ATPASE_A"/>
    <property type="match status" value="1"/>
</dbReference>
<comment type="function">
    <text evidence="1">Key component of the proton channel; it plays a direct role in the translocation of protons across the membrane.</text>
</comment>
<comment type="subunit">
    <text evidence="1">F-type ATPases have 2 components, CF(1) - the catalytic core - and CF(0) - the membrane proton channel. CF(1) has five subunits: alpha(3), beta(3), gamma(1), delta(1), epsilon(1). CF(0) has three main subunits: a(1), b(2) and c(9-12). The alpha and beta chains form an alternating ring which encloses part of the gamma chain. CF(1) is attached to CF(0) by a central stalk formed by the gamma and epsilon chains, while a peripheral stalk is formed by the delta and b chains.</text>
</comment>
<comment type="subcellular location">
    <subcellularLocation>
        <location evidence="1">Cell inner membrane</location>
        <topology evidence="1">Multi-pass membrane protein</topology>
    </subcellularLocation>
</comment>
<comment type="similarity">
    <text evidence="1">Belongs to the ATPase A chain family.</text>
</comment>
<accession>Q6FFK6</accession>
<gene>
    <name evidence="1" type="primary">atpB</name>
    <name type="ordered locus">ACIAD0180</name>
</gene>
<organism>
    <name type="scientific">Acinetobacter baylyi (strain ATCC 33305 / BD413 / ADP1)</name>
    <dbReference type="NCBI Taxonomy" id="62977"/>
    <lineage>
        <taxon>Bacteria</taxon>
        <taxon>Pseudomonadati</taxon>
        <taxon>Pseudomonadota</taxon>
        <taxon>Gammaproteobacteria</taxon>
        <taxon>Moraxellales</taxon>
        <taxon>Moraxellaceae</taxon>
        <taxon>Acinetobacter</taxon>
    </lineage>
</organism>
<evidence type="ECO:0000255" key="1">
    <source>
        <dbReference type="HAMAP-Rule" id="MF_01393"/>
    </source>
</evidence>
<feature type="chain" id="PRO_0000362222" description="ATP synthase subunit a">
    <location>
        <begin position="1"/>
        <end position="291"/>
    </location>
</feature>
<feature type="transmembrane region" description="Helical" evidence="1">
    <location>
        <begin position="48"/>
        <end position="68"/>
    </location>
</feature>
<feature type="transmembrane region" description="Helical" evidence="1">
    <location>
        <begin position="108"/>
        <end position="128"/>
    </location>
</feature>
<feature type="transmembrane region" description="Helical" evidence="1">
    <location>
        <begin position="161"/>
        <end position="181"/>
    </location>
</feature>
<feature type="transmembrane region" description="Helical" evidence="1">
    <location>
        <begin position="241"/>
        <end position="261"/>
    </location>
</feature>
<feature type="transmembrane region" description="Helical" evidence="1">
    <location>
        <begin position="262"/>
        <end position="282"/>
    </location>
</feature>